<accession>Q6SW10</accession>
<accession>D2K3U1</accession>
<organism>
    <name type="scientific">Human cytomegalovirus (strain Merlin)</name>
    <name type="common">HHV-5</name>
    <name type="synonym">Human herpesvirus 5</name>
    <dbReference type="NCBI Taxonomy" id="295027"/>
    <lineage>
        <taxon>Viruses</taxon>
        <taxon>Duplodnaviria</taxon>
        <taxon>Heunggongvirae</taxon>
        <taxon>Peploviricota</taxon>
        <taxon>Herviviricetes</taxon>
        <taxon>Herpesvirales</taxon>
        <taxon>Orthoherpesviridae</taxon>
        <taxon>Betaherpesvirinae</taxon>
        <taxon>Cytomegalovirus</taxon>
        <taxon>Cytomegalovirus humanbeta5</taxon>
        <taxon>Human cytomegalovirus</taxon>
    </lineage>
</organism>
<evidence type="ECO:0000255" key="1"/>
<evidence type="ECO:0000256" key="2">
    <source>
        <dbReference type="SAM" id="MobiDB-lite"/>
    </source>
</evidence>
<evidence type="ECO:0000269" key="3">
    <source>
    </source>
</evidence>
<feature type="chain" id="PRO_0000418328" description="Protein UL133">
    <location>
        <begin position="1"/>
        <end position="257"/>
    </location>
</feature>
<feature type="transmembrane region" description="Helical" evidence="1">
    <location>
        <begin position="14"/>
        <end position="34"/>
    </location>
</feature>
<feature type="transmembrane region" description="Helical" evidence="1">
    <location>
        <begin position="45"/>
        <end position="65"/>
    </location>
</feature>
<feature type="region of interest" description="Disordered" evidence="2">
    <location>
        <begin position="149"/>
        <end position="232"/>
    </location>
</feature>
<feature type="compositionally biased region" description="Pro residues" evidence="2">
    <location>
        <begin position="164"/>
        <end position="175"/>
    </location>
</feature>
<feature type="compositionally biased region" description="Basic residues" evidence="2">
    <location>
        <begin position="179"/>
        <end position="193"/>
    </location>
</feature>
<feature type="compositionally biased region" description="Pro residues" evidence="2">
    <location>
        <begin position="214"/>
        <end position="228"/>
    </location>
</feature>
<proteinExistence type="predicted"/>
<sequence length="257" mass="27582">MGCDVHDPSWQCQWGVPTIIVAWITCAALGIWCLAGSSADVSSGPGIAAVVGCSVFMIFLCAYLIRYREFFKDSVIDLLTCRWVRYCSCSCKCSCKCISGPCSRCCSACYKETMIYDMVQYGHRRRPGHGDDPDRVICEIVESPPVSAPTVFVPPPSEESHQPVIPPQPPTPTSEPKPKKGRAKDKPKGRPKNKPPCEPTVSSQPPSQPTAMPGGPPDASPPAMPQMPPGVAEAVQAAVQAAMAAALQQQQQHQTGT</sequence>
<protein>
    <recommendedName>
        <fullName>Protein UL133</fullName>
    </recommendedName>
</protein>
<keyword id="KW-1040">Host Golgi apparatus</keyword>
<keyword id="KW-1043">Host membrane</keyword>
<keyword id="KW-0472">Membrane</keyword>
<keyword id="KW-1185">Reference proteome</keyword>
<keyword id="KW-0812">Transmembrane</keyword>
<keyword id="KW-1133">Transmembrane helix</keyword>
<reference key="1">
    <citation type="journal article" date="2004" name="J. Gen. Virol.">
        <title>Genetic content of wild-type human cytomegalovirus.</title>
        <authorList>
            <person name="Dolan A."/>
            <person name="Cunningham C."/>
            <person name="Hector R.D."/>
            <person name="Hassan-Walker A.F."/>
            <person name="Lee L."/>
            <person name="Addison C."/>
            <person name="Dargan D.J."/>
            <person name="McGeoch D.J."/>
            <person name="Gatherer D."/>
            <person name="Emery V.C."/>
            <person name="Griffiths P.D."/>
            <person name="Sinzger C."/>
            <person name="McSharry B.P."/>
            <person name="Wilkinson G.W.G."/>
            <person name="Davison A.J."/>
        </authorList>
    </citation>
    <scope>NUCLEOTIDE SEQUENCE [LARGE SCALE GENOMIC DNA]</scope>
</reference>
<reference key="2">
    <citation type="journal article" date="2011" name="PLoS Pathog.">
        <title>A novel human cytomegalovirus locus modulates cell type-specific outcomes of infection.</title>
        <authorList>
            <person name="Umashankar M."/>
            <person name="Petrucelli A."/>
            <person name="Cicchini L."/>
            <person name="Caposio P."/>
            <person name="Kreklywich C.N."/>
            <person name="Rak M."/>
            <person name="Bughio F."/>
            <person name="Goldman D.C."/>
            <person name="Hamlin K.L."/>
            <person name="Nelson J.A."/>
            <person name="Fleming W.H."/>
            <person name="Streblow D.N."/>
            <person name="Goodrum F."/>
        </authorList>
    </citation>
    <scope>SUBCELLULAR LOCATION</scope>
    <source>
        <strain>FIX</strain>
    </source>
</reference>
<comment type="subcellular location">
    <subcellularLocation>
        <location evidence="3">Host Golgi apparatus membrane</location>
        <topology evidence="3">Multi-pass membrane protein</topology>
    </subcellularLocation>
</comment>
<dbReference type="EMBL" id="AY446894">
    <property type="protein sequence ID" value="AAR31685.1"/>
    <property type="molecule type" value="Genomic_DNA"/>
</dbReference>
<dbReference type="RefSeq" id="YP_081581.1">
    <property type="nucleotide sequence ID" value="NC_006273.2"/>
</dbReference>
<dbReference type="SMR" id="Q6SW10"/>
<dbReference type="DNASU" id="3077577"/>
<dbReference type="GeneID" id="3077577"/>
<dbReference type="KEGG" id="vg:3077577"/>
<dbReference type="Reactome" id="R-HSA-9609690">
    <property type="pathway name" value="HCMV Early Events"/>
</dbReference>
<dbReference type="Proteomes" id="UP000000938">
    <property type="component" value="Segment"/>
</dbReference>
<dbReference type="GO" id="GO:0044178">
    <property type="term" value="C:host cell Golgi membrane"/>
    <property type="evidence" value="ECO:0007669"/>
    <property type="project" value="UniProtKB-SubCell"/>
</dbReference>
<dbReference type="GO" id="GO:0016020">
    <property type="term" value="C:membrane"/>
    <property type="evidence" value="ECO:0007669"/>
    <property type="project" value="UniProtKB-KW"/>
</dbReference>
<name>UL133_HCMVM</name>
<gene>
    <name type="primary">UL133</name>
</gene>
<organismHost>
    <name type="scientific">Homo sapiens</name>
    <name type="common">Human</name>
    <dbReference type="NCBI Taxonomy" id="9606"/>
</organismHost>